<proteinExistence type="inferred from homology"/>
<gene>
    <name type="primary">DNA-U2</name>
    <name type="synonym">C6</name>
</gene>
<comment type="similarity">
    <text evidence="1">Belongs to the nanovirus U2 protein family.</text>
</comment>
<reference key="1">
    <citation type="journal article" date="1997" name="Virology">
        <title>Analysis of six DNA components of the faba bean necrotic yellows virus genome and their structural affinity to related plant virus genomes.</title>
        <authorList>
            <person name="Katul L."/>
            <person name="Maiss E."/>
            <person name="Morozov S.Y."/>
            <person name="Vetten H.J."/>
        </authorList>
    </citation>
    <scope>NUCLEOTIDE SEQUENCE [GENOMIC DNA]</scope>
</reference>
<evidence type="ECO:0000305" key="1"/>
<accession>O39832</accession>
<feature type="chain" id="PRO_0000378543" description="Protein U2">
    <location>
        <begin position="1"/>
        <end position="124"/>
    </location>
</feature>
<sequence length="124" mass="15129">MPSIRRLKLSMRELYKLKEQQDSFWNSYHGYLRANEEALGEFCRYHGRIVSAYPNLPSYAPTRWLLKTRPLYDIRVVDCKECQKDEERRRRFSVRNTEGLQDLYDYGNYRYQVYYGNHNDVLRS</sequence>
<keyword id="KW-1185">Reference proteome</keyword>
<name>U2_FBNY2</name>
<organism>
    <name type="scientific">Faba bean necrotic yellows virus (isolate Syrian SV292-88)</name>
    <name type="common">FBNYV</name>
    <dbReference type="NCBI Taxonomy" id="291604"/>
    <lineage>
        <taxon>Viruses</taxon>
        <taxon>Monodnaviria</taxon>
        <taxon>Shotokuvirae</taxon>
        <taxon>Cressdnaviricota</taxon>
        <taxon>Arfiviricetes</taxon>
        <taxon>Mulpavirales</taxon>
        <taxon>Nanoviridae</taxon>
        <taxon>Nanovirus</taxon>
        <taxon>Faba bean necrotic yellows virus</taxon>
    </lineage>
</organism>
<organismHost>
    <name type="scientific">Cicer arietinum</name>
    <name type="common">Chickpea</name>
    <name type="synonym">Garbanzo</name>
    <dbReference type="NCBI Taxonomy" id="3827"/>
</organismHost>
<organismHost>
    <name type="scientific">Lens culinaris</name>
    <name type="common">Lentil</name>
    <name type="synonym">Cicer lens</name>
    <dbReference type="NCBI Taxonomy" id="3864"/>
</organismHost>
<organismHost>
    <name type="scientific">Phaseolus vulgaris</name>
    <name type="common">Kidney bean</name>
    <name type="synonym">French bean</name>
    <dbReference type="NCBI Taxonomy" id="3885"/>
</organismHost>
<organismHost>
    <name type="scientific">Vicia faba</name>
    <name type="common">Broad bean</name>
    <name type="synonym">Faba vulgaris</name>
    <dbReference type="NCBI Taxonomy" id="3906"/>
</organismHost>
<protein>
    <recommendedName>
        <fullName>Protein U2</fullName>
    </recommendedName>
</protein>
<dbReference type="EMBL" id="Y11409">
    <property type="protein sequence ID" value="CAA72213.1"/>
    <property type="molecule type" value="Genomic_DNA"/>
</dbReference>
<dbReference type="SMR" id="O39832"/>
<dbReference type="Proteomes" id="UP001515460">
    <property type="component" value="Genome"/>
</dbReference>